<keyword id="KW-0997">Cell inner membrane</keyword>
<keyword id="KW-1003">Cell membrane</keyword>
<keyword id="KW-0472">Membrane</keyword>
<keyword id="KW-0653">Protein transport</keyword>
<keyword id="KW-0811">Translocation</keyword>
<keyword id="KW-0812">Transmembrane</keyword>
<keyword id="KW-1133">Transmembrane helix</keyword>
<keyword id="KW-0813">Transport</keyword>
<name>TATB_SHEB9</name>
<dbReference type="EMBL" id="CP000891">
    <property type="protein sequence ID" value="ABX47608.1"/>
    <property type="molecule type" value="Genomic_DNA"/>
</dbReference>
<dbReference type="RefSeq" id="WP_006087112.1">
    <property type="nucleotide sequence ID" value="NC_009997.1"/>
</dbReference>
<dbReference type="SMR" id="A9KYL4"/>
<dbReference type="GeneID" id="11770766"/>
<dbReference type="KEGG" id="sbn:Sbal195_0427"/>
<dbReference type="HOGENOM" id="CLU_086034_1_0_6"/>
<dbReference type="Proteomes" id="UP000000770">
    <property type="component" value="Chromosome"/>
</dbReference>
<dbReference type="GO" id="GO:0033281">
    <property type="term" value="C:TAT protein transport complex"/>
    <property type="evidence" value="ECO:0007669"/>
    <property type="project" value="UniProtKB-UniRule"/>
</dbReference>
<dbReference type="GO" id="GO:0008320">
    <property type="term" value="F:protein transmembrane transporter activity"/>
    <property type="evidence" value="ECO:0007669"/>
    <property type="project" value="UniProtKB-UniRule"/>
</dbReference>
<dbReference type="GO" id="GO:0043953">
    <property type="term" value="P:protein transport by the Tat complex"/>
    <property type="evidence" value="ECO:0007669"/>
    <property type="project" value="UniProtKB-UniRule"/>
</dbReference>
<dbReference type="Gene3D" id="1.20.5.3310">
    <property type="match status" value="1"/>
</dbReference>
<dbReference type="HAMAP" id="MF_00237">
    <property type="entry name" value="TatB"/>
    <property type="match status" value="1"/>
</dbReference>
<dbReference type="InterPro" id="IPR003369">
    <property type="entry name" value="TatA/B/E"/>
</dbReference>
<dbReference type="InterPro" id="IPR018448">
    <property type="entry name" value="TatB"/>
</dbReference>
<dbReference type="NCBIfam" id="TIGR01410">
    <property type="entry name" value="tatB"/>
    <property type="match status" value="1"/>
</dbReference>
<dbReference type="PANTHER" id="PTHR33162">
    <property type="entry name" value="SEC-INDEPENDENT PROTEIN TRANSLOCASE PROTEIN TATA, CHLOROPLASTIC"/>
    <property type="match status" value="1"/>
</dbReference>
<dbReference type="PANTHER" id="PTHR33162:SF1">
    <property type="entry name" value="SEC-INDEPENDENT PROTEIN TRANSLOCASE PROTEIN TATA, CHLOROPLASTIC"/>
    <property type="match status" value="1"/>
</dbReference>
<dbReference type="Pfam" id="PF02416">
    <property type="entry name" value="TatA_B_E"/>
    <property type="match status" value="1"/>
</dbReference>
<dbReference type="PRINTS" id="PR01506">
    <property type="entry name" value="TATBPROTEIN"/>
</dbReference>
<proteinExistence type="inferred from homology"/>
<evidence type="ECO:0000255" key="1">
    <source>
        <dbReference type="HAMAP-Rule" id="MF_00237"/>
    </source>
</evidence>
<evidence type="ECO:0000256" key="2">
    <source>
        <dbReference type="SAM" id="MobiDB-lite"/>
    </source>
</evidence>
<reference key="1">
    <citation type="submission" date="2007-11" db="EMBL/GenBank/DDBJ databases">
        <title>Complete sequence of chromosome of Shewanella baltica OS195.</title>
        <authorList>
            <consortium name="US DOE Joint Genome Institute"/>
            <person name="Copeland A."/>
            <person name="Lucas S."/>
            <person name="Lapidus A."/>
            <person name="Barry K."/>
            <person name="Glavina del Rio T."/>
            <person name="Dalin E."/>
            <person name="Tice H."/>
            <person name="Pitluck S."/>
            <person name="Chain P."/>
            <person name="Malfatti S."/>
            <person name="Shin M."/>
            <person name="Vergez L."/>
            <person name="Schmutz J."/>
            <person name="Larimer F."/>
            <person name="Land M."/>
            <person name="Hauser L."/>
            <person name="Kyrpides N."/>
            <person name="Kim E."/>
            <person name="Brettar I."/>
            <person name="Rodrigues J."/>
            <person name="Konstantinidis K."/>
            <person name="Klappenbach J."/>
            <person name="Hofle M."/>
            <person name="Tiedje J."/>
            <person name="Richardson P."/>
        </authorList>
    </citation>
    <scope>NUCLEOTIDE SEQUENCE [LARGE SCALE GENOMIC DNA]</scope>
    <source>
        <strain>OS195</strain>
    </source>
</reference>
<organism>
    <name type="scientific">Shewanella baltica (strain OS195)</name>
    <dbReference type="NCBI Taxonomy" id="399599"/>
    <lineage>
        <taxon>Bacteria</taxon>
        <taxon>Pseudomonadati</taxon>
        <taxon>Pseudomonadota</taxon>
        <taxon>Gammaproteobacteria</taxon>
        <taxon>Alteromonadales</taxon>
        <taxon>Shewanellaceae</taxon>
        <taxon>Shewanella</taxon>
    </lineage>
</organism>
<feature type="chain" id="PRO_1000078325" description="Sec-independent protein translocase protein TatB">
    <location>
        <begin position="1"/>
        <end position="171"/>
    </location>
</feature>
<feature type="transmembrane region" description="Helical" evidence="1">
    <location>
        <begin position="2"/>
        <end position="22"/>
    </location>
</feature>
<feature type="region of interest" description="Disordered" evidence="2">
    <location>
        <begin position="69"/>
        <end position="171"/>
    </location>
</feature>
<feature type="compositionally biased region" description="Polar residues" evidence="2">
    <location>
        <begin position="88"/>
        <end position="97"/>
    </location>
</feature>
<feature type="compositionally biased region" description="Low complexity" evidence="2">
    <location>
        <begin position="114"/>
        <end position="130"/>
    </location>
</feature>
<feature type="compositionally biased region" description="Low complexity" evidence="2">
    <location>
        <begin position="138"/>
        <end position="158"/>
    </location>
</feature>
<feature type="compositionally biased region" description="Polar residues" evidence="2">
    <location>
        <begin position="160"/>
        <end position="171"/>
    </location>
</feature>
<accession>A9KYL4</accession>
<protein>
    <recommendedName>
        <fullName evidence="1">Sec-independent protein translocase protein TatB</fullName>
    </recommendedName>
</protein>
<gene>
    <name evidence="1" type="primary">tatB</name>
    <name type="ordered locus">Sbal195_0427</name>
</gene>
<sequence length="171" mass="18317">MFDGIGFMELLLIGVLGLVVLGPERLPVAVRSITSWIRAMKRMANSVKEELEQELKIEQLHADLKKAESKGLSNLSPELKESIEQLKQAAQSVNRPYQVQDPVKDTPAPENQIHSPVSSTVQTSQVHTSPAQASQANPTATVEASPTSASPATPSEPSQGADTRSNPKANG</sequence>
<comment type="function">
    <text evidence="1">Part of the twin-arginine translocation (Tat) system that transports large folded proteins containing a characteristic twin-arginine motif in their signal peptide across membranes. Together with TatC, TatB is part of a receptor directly interacting with Tat signal peptides. TatB may form an oligomeric binding site that transiently accommodates folded Tat precursor proteins before their translocation.</text>
</comment>
<comment type="subunit">
    <text evidence="1">The Tat system comprises two distinct complexes: a TatABC complex, containing multiple copies of TatA, TatB and TatC subunits, and a separate TatA complex, containing only TatA subunits. Substrates initially bind to the TatABC complex, which probably triggers association of the separate TatA complex to form the active translocon.</text>
</comment>
<comment type="subcellular location">
    <subcellularLocation>
        <location evidence="1">Cell inner membrane</location>
        <topology evidence="1">Single-pass membrane protein</topology>
    </subcellularLocation>
</comment>
<comment type="similarity">
    <text evidence="1">Belongs to the TatB family.</text>
</comment>